<accession>P04007</accession>
<name>RNS2_NICAL</name>
<proteinExistence type="evidence at transcript level"/>
<gene>
    <name type="primary">S-2</name>
</gene>
<feature type="signal peptide" evidence="4">
    <location>
        <begin position="1"/>
        <end position="22"/>
    </location>
</feature>
<feature type="chain" id="PRO_0000030973" description="Ribonuclease S-2">
    <location>
        <begin position="23"/>
        <end position="214"/>
    </location>
</feature>
<feature type="active site" description="Proton donor" evidence="3 6">
    <location>
        <position position="53"/>
    </location>
</feature>
<feature type="active site" evidence="1">
    <location>
        <position position="109"/>
    </location>
</feature>
<feature type="active site" description="Proton acceptor" evidence="3 6">
    <location>
        <position position="113"/>
    </location>
</feature>
<feature type="binding site" evidence="2">
    <location>
        <position position="53"/>
    </location>
    <ligand>
        <name>RNA</name>
        <dbReference type="ChEBI" id="CHEBI:33697"/>
    </ligand>
    <ligandPart>
        <name>a 3'-terminal ribonucleotide 3'-phosphate residue</name>
        <dbReference type="ChEBI" id="CHEBI:83062"/>
    </ligandPart>
</feature>
<feature type="binding site" evidence="2">
    <location>
        <begin position="91"/>
        <end position="92"/>
    </location>
    <ligand>
        <name>RNA</name>
        <dbReference type="ChEBI" id="CHEBI:33697"/>
    </ligand>
    <ligandPart>
        <name>a 3'-terminal ribonucleotide 3'-phosphate residue</name>
        <dbReference type="ChEBI" id="CHEBI:83062"/>
    </ligandPart>
</feature>
<feature type="binding site" evidence="2">
    <location>
        <position position="94"/>
    </location>
    <ligand>
        <name>RNA</name>
        <dbReference type="ChEBI" id="CHEBI:33697"/>
    </ligand>
    <ligandPart>
        <name>a 3'-terminal ribonucleotide 3'-phosphate residue</name>
        <dbReference type="ChEBI" id="CHEBI:83062"/>
    </ligandPart>
</feature>
<feature type="binding site" evidence="2">
    <location>
        <position position="105"/>
    </location>
    <ligand>
        <name>RNA</name>
        <dbReference type="ChEBI" id="CHEBI:33697"/>
    </ligand>
    <ligandPart>
        <name>a 3'-terminal ribonucleotide 3'-phosphate residue</name>
        <dbReference type="ChEBI" id="CHEBI:83062"/>
    </ligandPart>
</feature>
<feature type="binding site" evidence="2">
    <location>
        <begin position="112"/>
        <end position="113"/>
    </location>
    <ligand>
        <name>RNA</name>
        <dbReference type="ChEBI" id="CHEBI:33697"/>
    </ligand>
    <ligandPart>
        <name>a 3'-terminal ribonucleotide 3'-phosphate residue</name>
        <dbReference type="ChEBI" id="CHEBI:83062"/>
    </ligandPart>
</feature>
<feature type="glycosylation site" id="CAR_000106" description="N-linked (GlcNAc...) asparagine" evidence="5">
    <location>
        <position position="49"/>
    </location>
</feature>
<feature type="glycosylation site" id="CAR_000107" description="N-linked (GlcNAc...) asparagine" evidence="5">
    <location>
        <position position="59"/>
    </location>
</feature>
<feature type="glycosylation site" id="CAR_000108" description="N-linked (GlcNAc...) asparagine" evidence="5">
    <location>
        <position position="160"/>
    </location>
</feature>
<feature type="disulfide bond" evidence="3">
    <location>
        <begin position="38"/>
        <end position="43"/>
    </location>
</feature>
<feature type="disulfide bond" evidence="1">
    <location>
        <begin position="67"/>
        <end position="116"/>
    </location>
</feature>
<feature type="disulfide bond" evidence="1">
    <location>
        <begin position="175"/>
        <end position="204"/>
    </location>
</feature>
<feature type="disulfide bond" evidence="2">
    <location>
        <begin position="187"/>
        <end position="198"/>
    </location>
</feature>
<sequence>MSKSQLTSVFFILLCALSPIYGAFEYMQLVLTWPITFCRIKHCERTPTNFTIHGLWPDNHTTMLNYCDRSKPYNMFTDGKKKNDLDERWPDLTKTKFDSLDKQAFWKDEYVKHGTCCSDKFDREQYFDLAMTLRDKFDLLSSLRNHGISRGFSYTVQNLNNTIKAITGGFPNLTCSRLRELKEIGICFDETVKNVIDCPNPKTCKPTNKGVMFP</sequence>
<keyword id="KW-1015">Disulfide bond</keyword>
<keyword id="KW-0255">Endonuclease</keyword>
<keyword id="KW-0325">Glycoprotein</keyword>
<keyword id="KW-0378">Hydrolase</keyword>
<keyword id="KW-0456">Lyase</keyword>
<keyword id="KW-0540">Nuclease</keyword>
<keyword id="KW-0964">Secreted</keyword>
<keyword id="KW-0732">Signal</keyword>
<reference key="1">
    <citation type="journal article" date="1986" name="Nature">
        <title>Cloning of cDNA for a stylar glycoprotein associated with expression of self-incompatibility in Nicotiana alata.</title>
        <authorList>
            <person name="Anderson M.A."/>
            <person name="Cornish E.C."/>
            <person name="Mau S.-L."/>
            <person name="Williams E.G."/>
            <person name="Hoggart R."/>
            <person name="Atkinson A."/>
            <person name="Bonig I."/>
            <person name="Grego B."/>
            <person name="Simpson R."/>
            <person name="Roche P.J."/>
            <person name="Haley J.D."/>
            <person name="Penschow J.D."/>
            <person name="Niall H.D."/>
            <person name="Tregear G.W."/>
            <person name="Coghlan J.P."/>
            <person name="Crawford R.J."/>
            <person name="Clarke A.E."/>
        </authorList>
    </citation>
    <scope>NUCLEOTIDE SEQUENCE [MRNA]</scope>
</reference>
<reference key="2">
    <citation type="journal article" date="1995" name="Plant Mol. Biol.">
        <title>The S-locus of Nicotiana alata: genomic organization and sequence analysis of two S-RNase alleles.</title>
        <authorList>
            <person name="Matton D.P."/>
            <person name="Mau S.L."/>
            <person name="Okamoto S."/>
            <person name="Clarke A.E."/>
            <person name="Newbigin E."/>
        </authorList>
    </citation>
    <scope>NUCLEOTIDE SEQUENCE [GENOMIC DNA]</scope>
</reference>
<reference key="3">
    <citation type="journal article" date="1989" name="Nature">
        <title>Style self-incompatibility gene products of Nicotiana alata are ribonucleases.</title>
        <authorList>
            <person name="McClure B.A."/>
            <person name="Haring V."/>
            <person name="Ebert P.R."/>
            <person name="Anderson M.A."/>
            <person name="Simpson R.J."/>
            <person name="Sakiyama F."/>
            <person name="Clarke A.E."/>
        </authorList>
    </citation>
    <scope>FUNCTION</scope>
</reference>
<evidence type="ECO:0000250" key="1">
    <source>
        <dbReference type="UniProtKB" id="P08056"/>
    </source>
</evidence>
<evidence type="ECO:0000250" key="2">
    <source>
        <dbReference type="UniProtKB" id="P23540"/>
    </source>
</evidence>
<evidence type="ECO:0000250" key="3">
    <source>
        <dbReference type="UniProtKB" id="Q7SID5"/>
    </source>
</evidence>
<evidence type="ECO:0000255" key="4"/>
<evidence type="ECO:0000255" key="5">
    <source>
        <dbReference type="PROSITE-ProRule" id="PRU00498"/>
    </source>
</evidence>
<evidence type="ECO:0000255" key="6">
    <source>
        <dbReference type="PROSITE-ProRule" id="PRU10045"/>
    </source>
</evidence>
<evidence type="ECO:0000255" key="7">
    <source>
        <dbReference type="PROSITE-ProRule" id="PRU10046"/>
    </source>
</evidence>
<evidence type="ECO:0000269" key="8">
    <source>
    </source>
</evidence>
<evidence type="ECO:0000305" key="9"/>
<dbReference type="EC" id="4.6.1.19" evidence="7"/>
<dbReference type="EMBL" id="X03803">
    <property type="protein sequence ID" value="CAA27428.1"/>
    <property type="molecule type" value="mRNA"/>
</dbReference>
<dbReference type="EMBL" id="M24600">
    <property type="protein sequence ID" value="AAA34083.1"/>
    <property type="molecule type" value="mRNA"/>
</dbReference>
<dbReference type="EMBL" id="U08860">
    <property type="protein sequence ID" value="AAB40027.1"/>
    <property type="molecule type" value="Genomic_DNA"/>
</dbReference>
<dbReference type="PIR" id="S57782">
    <property type="entry name" value="LNNTSA"/>
</dbReference>
<dbReference type="SMR" id="P04007"/>
<dbReference type="GlyConnect" id="531">
    <property type="glycosylation" value="4 N-Linked glycans (3 sites)"/>
</dbReference>
<dbReference type="GlyCosmos" id="P04007">
    <property type="glycosylation" value="3 sites, 5 glycans"/>
</dbReference>
<dbReference type="GO" id="GO:0005576">
    <property type="term" value="C:extracellular region"/>
    <property type="evidence" value="ECO:0007669"/>
    <property type="project" value="UniProtKB-SubCell"/>
</dbReference>
<dbReference type="GO" id="GO:0033897">
    <property type="term" value="F:ribonuclease T2 activity"/>
    <property type="evidence" value="ECO:0007669"/>
    <property type="project" value="UniProtKB-EC"/>
</dbReference>
<dbReference type="GO" id="GO:0003723">
    <property type="term" value="F:RNA binding"/>
    <property type="evidence" value="ECO:0007669"/>
    <property type="project" value="InterPro"/>
</dbReference>
<dbReference type="GO" id="GO:0006401">
    <property type="term" value="P:RNA catabolic process"/>
    <property type="evidence" value="ECO:0007669"/>
    <property type="project" value="TreeGrafter"/>
</dbReference>
<dbReference type="CDD" id="cd01061">
    <property type="entry name" value="RNase_T2_euk"/>
    <property type="match status" value="1"/>
</dbReference>
<dbReference type="Gene3D" id="3.90.730.10">
    <property type="entry name" value="Ribonuclease T2-like"/>
    <property type="match status" value="1"/>
</dbReference>
<dbReference type="InterPro" id="IPR033697">
    <property type="entry name" value="Ribonuclease_T2_eukaryotic"/>
</dbReference>
<dbReference type="InterPro" id="IPR001568">
    <property type="entry name" value="RNase_T2-like"/>
</dbReference>
<dbReference type="InterPro" id="IPR036430">
    <property type="entry name" value="RNase_T2-like_sf"/>
</dbReference>
<dbReference type="InterPro" id="IPR018188">
    <property type="entry name" value="RNase_T2_His_AS_1"/>
</dbReference>
<dbReference type="InterPro" id="IPR033130">
    <property type="entry name" value="RNase_T2_His_AS_2"/>
</dbReference>
<dbReference type="PANTHER" id="PTHR11240:SF81">
    <property type="entry name" value="RIBONUCLEASE S-2"/>
    <property type="match status" value="1"/>
</dbReference>
<dbReference type="PANTHER" id="PTHR11240">
    <property type="entry name" value="RIBONUCLEASE T2"/>
    <property type="match status" value="1"/>
</dbReference>
<dbReference type="Pfam" id="PF00445">
    <property type="entry name" value="Ribonuclease_T2"/>
    <property type="match status" value="1"/>
</dbReference>
<dbReference type="SUPFAM" id="SSF55895">
    <property type="entry name" value="Ribonuclease Rh-like"/>
    <property type="match status" value="1"/>
</dbReference>
<dbReference type="PROSITE" id="PS00530">
    <property type="entry name" value="RNASE_T2_1"/>
    <property type="match status" value="1"/>
</dbReference>
<dbReference type="PROSITE" id="PS00531">
    <property type="entry name" value="RNASE_T2_2"/>
    <property type="match status" value="1"/>
</dbReference>
<organism>
    <name type="scientific">Nicotiana alata</name>
    <name type="common">Winged tobacco</name>
    <name type="synonym">Persian tobacco</name>
    <dbReference type="NCBI Taxonomy" id="4087"/>
    <lineage>
        <taxon>Eukaryota</taxon>
        <taxon>Viridiplantae</taxon>
        <taxon>Streptophyta</taxon>
        <taxon>Embryophyta</taxon>
        <taxon>Tracheophyta</taxon>
        <taxon>Spermatophyta</taxon>
        <taxon>Magnoliopsida</taxon>
        <taxon>eudicotyledons</taxon>
        <taxon>Gunneridae</taxon>
        <taxon>Pentapetalae</taxon>
        <taxon>asterids</taxon>
        <taxon>lamiids</taxon>
        <taxon>Solanales</taxon>
        <taxon>Solanaceae</taxon>
        <taxon>Nicotianoideae</taxon>
        <taxon>Nicotianeae</taxon>
        <taxon>Nicotiana</taxon>
    </lineage>
</organism>
<protein>
    <recommendedName>
        <fullName>Ribonuclease S-2</fullName>
        <ecNumber evidence="7">4.6.1.19</ecNumber>
    </recommendedName>
    <alternativeName>
        <fullName>S2-RNase</fullName>
    </alternativeName>
    <alternativeName>
        <fullName>Stylar glycoprotein 2</fullName>
    </alternativeName>
</protein>
<comment type="function">
    <text evidence="8">Self-incompatibility (SI) is the inherited ability of a flowering plant to prevent self-fertilization by discriminating between self and non-self pollen during pollination. In many species of the Solanaceae, self-incompatibility is controlled by the single, multiallelic locus S. This stylar glycoprotein is associated with expression of self-incompatibility in potato.</text>
</comment>
<comment type="catalytic activity">
    <reaction evidence="6 7">
        <text>a ribonucleotidyl-ribonucleotide-RNA + H2O = a 3'-end 3'-phospho-ribonucleotide-RNA + a 5'-end dephospho-ribonucleoside-RNA + H(+)</text>
        <dbReference type="Rhea" id="RHEA:68052"/>
        <dbReference type="Rhea" id="RHEA-COMP:10463"/>
        <dbReference type="Rhea" id="RHEA-COMP:13936"/>
        <dbReference type="Rhea" id="RHEA-COMP:17355"/>
        <dbReference type="ChEBI" id="CHEBI:15377"/>
        <dbReference type="ChEBI" id="CHEBI:15378"/>
        <dbReference type="ChEBI" id="CHEBI:83062"/>
        <dbReference type="ChEBI" id="CHEBI:138284"/>
        <dbReference type="ChEBI" id="CHEBI:173118"/>
        <dbReference type="EC" id="4.6.1.19"/>
    </reaction>
</comment>
<comment type="subcellular location">
    <subcellularLocation>
        <location>Secreted</location>
        <location>Extracellular space</location>
    </subcellularLocation>
</comment>
<comment type="similarity">
    <text evidence="9">Belongs to the RNase T2 family.</text>
</comment>